<protein>
    <recommendedName>
        <fullName evidence="1">2,3,4,5-tetrahydropyridine-2,6-dicarboxylate N-succinyltransferase</fullName>
        <ecNumber evidence="1">2.3.1.117</ecNumber>
    </recommendedName>
    <alternativeName>
        <fullName evidence="1">Tetrahydrodipicolinate N-succinyltransferase</fullName>
        <shortName evidence="1">THP succinyltransferase</shortName>
        <shortName evidence="1">Tetrahydropicolinate succinylase</shortName>
    </alternativeName>
</protein>
<reference key="1">
    <citation type="submission" date="2008-02" db="EMBL/GenBank/DDBJ databases">
        <title>Complete sequence of chromosome of Methylobacterium sp. 4-46.</title>
        <authorList>
            <consortium name="US DOE Joint Genome Institute"/>
            <person name="Copeland A."/>
            <person name="Lucas S."/>
            <person name="Lapidus A."/>
            <person name="Glavina del Rio T."/>
            <person name="Dalin E."/>
            <person name="Tice H."/>
            <person name="Bruce D."/>
            <person name="Goodwin L."/>
            <person name="Pitluck S."/>
            <person name="Chertkov O."/>
            <person name="Brettin T."/>
            <person name="Detter J.C."/>
            <person name="Han C."/>
            <person name="Kuske C.R."/>
            <person name="Schmutz J."/>
            <person name="Larimer F."/>
            <person name="Land M."/>
            <person name="Hauser L."/>
            <person name="Kyrpides N."/>
            <person name="Ivanova N."/>
            <person name="Marx C.J."/>
            <person name="Richardson P."/>
        </authorList>
    </citation>
    <scope>NUCLEOTIDE SEQUENCE [LARGE SCALE GENOMIC DNA]</scope>
    <source>
        <strain>4-46</strain>
    </source>
</reference>
<proteinExistence type="inferred from homology"/>
<name>DAPD_METS4</name>
<organism>
    <name type="scientific">Methylobacterium sp. (strain 4-46)</name>
    <dbReference type="NCBI Taxonomy" id="426117"/>
    <lineage>
        <taxon>Bacteria</taxon>
        <taxon>Pseudomonadati</taxon>
        <taxon>Pseudomonadota</taxon>
        <taxon>Alphaproteobacteria</taxon>
        <taxon>Hyphomicrobiales</taxon>
        <taxon>Methylobacteriaceae</taxon>
        <taxon>Methylobacterium</taxon>
    </lineage>
</organism>
<gene>
    <name evidence="1" type="primary">dapD</name>
    <name type="ordered locus">M446_1397</name>
</gene>
<comment type="catalytic activity">
    <reaction evidence="1">
        <text>(S)-2,3,4,5-tetrahydrodipicolinate + succinyl-CoA + H2O = (S)-2-succinylamino-6-oxoheptanedioate + CoA</text>
        <dbReference type="Rhea" id="RHEA:17325"/>
        <dbReference type="ChEBI" id="CHEBI:15377"/>
        <dbReference type="ChEBI" id="CHEBI:15685"/>
        <dbReference type="ChEBI" id="CHEBI:16845"/>
        <dbReference type="ChEBI" id="CHEBI:57287"/>
        <dbReference type="ChEBI" id="CHEBI:57292"/>
        <dbReference type="EC" id="2.3.1.117"/>
    </reaction>
</comment>
<comment type="pathway">
    <text evidence="1">Amino-acid biosynthesis; L-lysine biosynthesis via DAP pathway; LL-2,6-diaminopimelate from (S)-tetrahydrodipicolinate (succinylase route): step 1/3.</text>
</comment>
<comment type="subcellular location">
    <subcellularLocation>
        <location evidence="1">Cytoplasm</location>
    </subcellularLocation>
</comment>
<comment type="similarity">
    <text evidence="1">Belongs to the transferase hexapeptide repeat family.</text>
</comment>
<feature type="chain" id="PRO_1000134055" description="2,3,4,5-tetrahydropyridine-2,6-dicarboxylate N-succinyltransferase">
    <location>
        <begin position="1"/>
        <end position="281"/>
    </location>
</feature>
<accession>B0UJH5</accession>
<evidence type="ECO:0000255" key="1">
    <source>
        <dbReference type="HAMAP-Rule" id="MF_00811"/>
    </source>
</evidence>
<keyword id="KW-0012">Acyltransferase</keyword>
<keyword id="KW-0028">Amino-acid biosynthesis</keyword>
<keyword id="KW-0963">Cytoplasm</keyword>
<keyword id="KW-0220">Diaminopimelate biosynthesis</keyword>
<keyword id="KW-0457">Lysine biosynthesis</keyword>
<keyword id="KW-0677">Repeat</keyword>
<keyword id="KW-0808">Transferase</keyword>
<sequence length="281" mass="29291">MSHADLARTIEAAWEDRADVTAATQGPVREAVEAALALLDSGQVRVAEKSGNADWQVNQWLKKAVLLSFRLTDMELISGAPGGAAWWDKVPSKFDGWDAERFRQAGFRAVPGAIVRRSAFIAPGAVLMPSFVNLGAHVGEGTMVDTWATVGSCAQIGKNCHISGGAGIGGVLEPLQANPVIIEDNCFIGARAEVAEGVIVGEGSVLSMGVYLGASTKIVDRATGEVVYGRVPPYSVVVSGSLPGKALPDGAPGPALYCAVIVKRVDAGTRAKTGINELLRD</sequence>
<dbReference type="EC" id="2.3.1.117" evidence="1"/>
<dbReference type="EMBL" id="CP000943">
    <property type="protein sequence ID" value="ACA15913.1"/>
    <property type="molecule type" value="Genomic_DNA"/>
</dbReference>
<dbReference type="RefSeq" id="WP_012331330.1">
    <property type="nucleotide sequence ID" value="NC_010511.1"/>
</dbReference>
<dbReference type="SMR" id="B0UJH5"/>
<dbReference type="STRING" id="426117.M446_1397"/>
<dbReference type="KEGG" id="met:M446_1397"/>
<dbReference type="eggNOG" id="COG2171">
    <property type="taxonomic scope" value="Bacteria"/>
</dbReference>
<dbReference type="HOGENOM" id="CLU_050859_0_1_5"/>
<dbReference type="UniPathway" id="UPA00034">
    <property type="reaction ID" value="UER00019"/>
</dbReference>
<dbReference type="GO" id="GO:0005737">
    <property type="term" value="C:cytoplasm"/>
    <property type="evidence" value="ECO:0007669"/>
    <property type="project" value="UniProtKB-SubCell"/>
</dbReference>
<dbReference type="GO" id="GO:0008666">
    <property type="term" value="F:2,3,4,5-tetrahydropyridine-2,6-dicarboxylate N-succinyltransferase activity"/>
    <property type="evidence" value="ECO:0007669"/>
    <property type="project" value="UniProtKB-UniRule"/>
</dbReference>
<dbReference type="GO" id="GO:0016779">
    <property type="term" value="F:nucleotidyltransferase activity"/>
    <property type="evidence" value="ECO:0007669"/>
    <property type="project" value="TreeGrafter"/>
</dbReference>
<dbReference type="GO" id="GO:0019877">
    <property type="term" value="P:diaminopimelate biosynthetic process"/>
    <property type="evidence" value="ECO:0007669"/>
    <property type="project" value="UniProtKB-UniRule"/>
</dbReference>
<dbReference type="GO" id="GO:0009089">
    <property type="term" value="P:lysine biosynthetic process via diaminopimelate"/>
    <property type="evidence" value="ECO:0007669"/>
    <property type="project" value="UniProtKB-UniRule"/>
</dbReference>
<dbReference type="CDD" id="cd03350">
    <property type="entry name" value="LbH_THP_succinylT"/>
    <property type="match status" value="1"/>
</dbReference>
<dbReference type="Gene3D" id="2.160.10.10">
    <property type="entry name" value="Hexapeptide repeat proteins"/>
    <property type="match status" value="1"/>
</dbReference>
<dbReference type="Gene3D" id="1.10.166.10">
    <property type="entry name" value="Tetrahydrodipicolinate-N-succinyltransferase, N-terminal domain"/>
    <property type="match status" value="1"/>
</dbReference>
<dbReference type="HAMAP" id="MF_00811">
    <property type="entry name" value="DapD"/>
    <property type="match status" value="1"/>
</dbReference>
<dbReference type="InterPro" id="IPR005664">
    <property type="entry name" value="DapD_Trfase_Hexpep_rpt_fam"/>
</dbReference>
<dbReference type="InterPro" id="IPR001451">
    <property type="entry name" value="Hexapep"/>
</dbReference>
<dbReference type="InterPro" id="IPR023180">
    <property type="entry name" value="THP_succinylTrfase_dom1"/>
</dbReference>
<dbReference type="InterPro" id="IPR037133">
    <property type="entry name" value="THP_succinylTrfase_N_sf"/>
</dbReference>
<dbReference type="InterPro" id="IPR011004">
    <property type="entry name" value="Trimer_LpxA-like_sf"/>
</dbReference>
<dbReference type="NCBIfam" id="TIGR00965">
    <property type="entry name" value="dapD"/>
    <property type="match status" value="1"/>
</dbReference>
<dbReference type="NCBIfam" id="NF008808">
    <property type="entry name" value="PRK11830.1"/>
    <property type="match status" value="1"/>
</dbReference>
<dbReference type="PANTHER" id="PTHR19136:SF52">
    <property type="entry name" value="2,3,4,5-TETRAHYDROPYRIDINE-2,6-DICARBOXYLATE N-SUCCINYLTRANSFERASE"/>
    <property type="match status" value="1"/>
</dbReference>
<dbReference type="PANTHER" id="PTHR19136">
    <property type="entry name" value="MOLYBDENUM COFACTOR GUANYLYLTRANSFERASE"/>
    <property type="match status" value="1"/>
</dbReference>
<dbReference type="Pfam" id="PF00132">
    <property type="entry name" value="Hexapep"/>
    <property type="match status" value="1"/>
</dbReference>
<dbReference type="Pfam" id="PF14602">
    <property type="entry name" value="Hexapep_2"/>
    <property type="match status" value="1"/>
</dbReference>
<dbReference type="Pfam" id="PF14805">
    <property type="entry name" value="THDPS_N_2"/>
    <property type="match status" value="1"/>
</dbReference>
<dbReference type="SUPFAM" id="SSF51161">
    <property type="entry name" value="Trimeric LpxA-like enzymes"/>
    <property type="match status" value="1"/>
</dbReference>